<evidence type="ECO:0000305" key="1"/>
<evidence type="ECO:0007829" key="2">
    <source>
        <dbReference type="PDB" id="1KB7"/>
    </source>
</evidence>
<evidence type="ECO:0007829" key="3">
    <source>
        <dbReference type="PDB" id="1KB8"/>
    </source>
</evidence>
<organism>
    <name type="scientific">Pseudomonas aeruginosa</name>
    <dbReference type="NCBI Taxonomy" id="287"/>
    <lineage>
        <taxon>Bacteria</taxon>
        <taxon>Pseudomonadati</taxon>
        <taxon>Pseudomonadota</taxon>
        <taxon>Gammaproteobacteria</taxon>
        <taxon>Pseudomonadales</taxon>
        <taxon>Pseudomonadaceae</taxon>
        <taxon>Pseudomonas</taxon>
    </lineage>
</organism>
<gene>
    <name type="primary">pil</name>
</gene>
<name>FMK7_PSEAI</name>
<protein>
    <recommendedName>
        <fullName>Fimbrial protein</fullName>
    </recommendedName>
    <alternativeName>
        <fullName>Pilin</fullName>
    </alternativeName>
</protein>
<comment type="subunit">
    <text>The pili are polar flexible filaments of about 5.4 nanometers diameter and 2.5 micrometers average length; they consist of only a single polypeptide chain arranged in a helical configuration of five subunits per turn in the assembled pilus.</text>
</comment>
<comment type="subcellular location">
    <subcellularLocation>
        <location>Fimbrium</location>
    </subcellularLocation>
</comment>
<comment type="similarity">
    <text evidence="1">Belongs to the N-Me-Phe pilin family.</text>
</comment>
<feature type="chain" id="PRO_0000197501" description="Fimbrial protein">
    <location>
        <begin position="1" status="less than"/>
        <end position="23"/>
    </location>
</feature>
<feature type="disulfide bond">
    <location>
        <begin position="8"/>
        <end position="21"/>
    </location>
</feature>
<feature type="non-terminal residue">
    <location>
        <position position="1"/>
    </location>
</feature>
<feature type="strand" evidence="3">
    <location>
        <begin position="9"/>
        <end position="12"/>
    </location>
</feature>
<feature type="turn" evidence="2">
    <location>
        <begin position="14"/>
        <end position="16"/>
    </location>
</feature>
<keyword id="KW-0002">3D-structure</keyword>
<keyword id="KW-1015">Disulfide bond</keyword>
<keyword id="KW-0281">Fimbrium</keyword>
<reference key="1">
    <citation type="journal article" date="1994" name="J. Infect. Dis.">
        <title>A multicenter comparison of methods for typing strains of Pseudomonas aeruginosa predominantly from patients with cystic fibrosis.</title>
        <authorList>
            <consortium name="International Pseudomonas aeruginosa typing study group"/>
        </authorList>
    </citation>
    <scope>NUCLEOTIDE SEQUENCE [GENOMIC DNA]</scope>
    <source>
        <strain>KB7</strain>
    </source>
</reference>
<reference key="2">
    <citation type="journal article" date="1995" name="Biochemistry">
        <title>Comparison of NMR solution structures of the receptor binding domains of Pseudomonas aeruginosa pili strains PAO, KB7, and PAK: implications for receptor binding and synthetic vaccine design.</title>
        <authorList>
            <person name="Campbell A.P."/>
            <person name="McInnes C."/>
            <person name="Hodges R.S."/>
            <person name="Sykes B.D."/>
        </authorList>
    </citation>
    <scope>STRUCTURE BY NMR OF 7-23</scope>
    <source>
        <strain>KB7</strain>
    </source>
</reference>
<dbReference type="EMBL" id="S67809">
    <property type="protein sequence ID" value="AAM26732.1"/>
    <property type="molecule type" value="Genomic_DNA"/>
</dbReference>
<dbReference type="PDB" id="1KB7">
    <property type="method" value="NMR"/>
    <property type="chains" value="A=7-23"/>
</dbReference>
<dbReference type="PDB" id="1KB8">
    <property type="method" value="NMR"/>
    <property type="chains" value="A=7-23"/>
</dbReference>
<dbReference type="PDBsum" id="1KB7"/>
<dbReference type="PDBsum" id="1KB8"/>
<dbReference type="SMR" id="Q53391"/>
<dbReference type="EvolutionaryTrace" id="Q53391"/>
<dbReference type="GO" id="GO:0009289">
    <property type="term" value="C:pilus"/>
    <property type="evidence" value="ECO:0007669"/>
    <property type="project" value="UniProtKB-SubCell"/>
</dbReference>
<dbReference type="GO" id="GO:0007155">
    <property type="term" value="P:cell adhesion"/>
    <property type="evidence" value="ECO:0007669"/>
    <property type="project" value="InterPro"/>
</dbReference>
<dbReference type="Gene3D" id="3.30.700.10">
    <property type="entry name" value="Glycoprotein, Type 4 Pilin"/>
    <property type="match status" value="1"/>
</dbReference>
<dbReference type="InterPro" id="IPR001082">
    <property type="entry name" value="Pilin"/>
</dbReference>
<dbReference type="InterPro" id="IPR045584">
    <property type="entry name" value="Pilin-like"/>
</dbReference>
<dbReference type="Pfam" id="PF00114">
    <property type="entry name" value="Pilin"/>
    <property type="match status" value="1"/>
</dbReference>
<dbReference type="SUPFAM" id="SSF54523">
    <property type="entry name" value="Pili subunits"/>
    <property type="match status" value="1"/>
</dbReference>
<proteinExistence type="evidence at protein level"/>
<accession>Q53391</accession>
<sequence length="23" mass="2415">DVNGGWSCATTVDAKFRPNGCTD</sequence>